<protein>
    <recommendedName>
        <fullName>Capsid protein</fullName>
    </recommendedName>
    <alternativeName>
        <fullName>CA1</fullName>
    </alternativeName>
    <alternativeName>
        <fullName>Coat protein</fullName>
    </alternativeName>
</protein>
<organismHost>
    <name type="scientific">Gallus gallus</name>
    <name type="common">Chicken</name>
    <dbReference type="NCBI Taxonomy" id="9031"/>
</organismHost>
<accession>Q9IZU5</accession>
<reference key="1">
    <citation type="journal article" date="2000" name="Aust. Vet. J.">
        <title>Full-length infectious clone of a pathogenic Australian isolate of chicken anaemia virus.</title>
        <authorList>
            <person name="Brown H.K."/>
            <person name="Browning G.F."/>
            <person name="Scott P.C."/>
            <person name="Crabb B.S."/>
            <person name="Brown K."/>
        </authorList>
    </citation>
    <scope>NUCLEOTIDE SEQUENCE [GENOMIC DNA]</scope>
</reference>
<dbReference type="EMBL" id="AF227982">
    <property type="protein sequence ID" value="AAF34789.1"/>
    <property type="molecule type" value="Genomic_DNA"/>
</dbReference>
<dbReference type="Proteomes" id="UP000007539">
    <property type="component" value="Genome"/>
</dbReference>
<dbReference type="GO" id="GO:0043657">
    <property type="term" value="C:host cell"/>
    <property type="evidence" value="ECO:0007669"/>
    <property type="project" value="GOC"/>
</dbReference>
<dbReference type="GO" id="GO:0042025">
    <property type="term" value="C:host cell nucleus"/>
    <property type="evidence" value="ECO:0007669"/>
    <property type="project" value="UniProtKB-SubCell"/>
</dbReference>
<dbReference type="GO" id="GO:0039615">
    <property type="term" value="C:T=1 icosahedral viral capsid"/>
    <property type="evidence" value="ECO:0007669"/>
    <property type="project" value="UniProtKB-KW"/>
</dbReference>
<dbReference type="GO" id="GO:0003677">
    <property type="term" value="F:DNA binding"/>
    <property type="evidence" value="ECO:0007669"/>
    <property type="project" value="UniProtKB-KW"/>
</dbReference>
<dbReference type="GO" id="GO:0075509">
    <property type="term" value="P:endocytosis involved in viral entry into host cell"/>
    <property type="evidence" value="ECO:0007669"/>
    <property type="project" value="UniProtKB-KW"/>
</dbReference>
<dbReference type="GO" id="GO:0075732">
    <property type="term" value="P:viral penetration into host nucleus"/>
    <property type="evidence" value="ECO:0007669"/>
    <property type="project" value="UniProtKB-KW"/>
</dbReference>
<dbReference type="GO" id="GO:0019062">
    <property type="term" value="P:virion attachment to host cell"/>
    <property type="evidence" value="ECO:0007669"/>
    <property type="project" value="UniProtKB-KW"/>
</dbReference>
<dbReference type="InterPro" id="IPR007291">
    <property type="entry name" value="Capsid_protein"/>
</dbReference>
<dbReference type="Pfam" id="PF04162">
    <property type="entry name" value="Gyro_capsid"/>
    <property type="match status" value="1"/>
</dbReference>
<name>CAPSD_CAVCA</name>
<organism>
    <name type="scientific">Chicken anemia virus (isolate Australia/CAU269-7/2000)</name>
    <name type="common">CAV</name>
    <dbReference type="NCBI Taxonomy" id="486492"/>
    <lineage>
        <taxon>Viruses</taxon>
        <taxon>Viruses incertae sedis</taxon>
        <taxon>Anelloviridae</taxon>
        <taxon>Gyrovirus</taxon>
        <taxon>Gyrovirus chickenanemia</taxon>
    </lineage>
</organism>
<feature type="chain" id="PRO_0000314473" description="Capsid protein">
    <location>
        <begin position="1"/>
        <end position="449"/>
    </location>
</feature>
<feature type="region of interest" description="DNA-binding" evidence="1">
    <location>
        <begin position="1"/>
        <end position="43"/>
    </location>
</feature>
<feature type="region of interest" description="Nuclear localization signals" evidence="2">
    <location>
        <begin position="6"/>
        <end position="47"/>
    </location>
</feature>
<gene>
    <name type="primary">VP1</name>
</gene>
<sequence>MARRARRPRGRFYAFRRGRWHHLKRLRRRYKFRHRRRQRYRRRAFRKAFHNPRPGTYSVRLPNPQSTMTIRFQGVIFLTEGLILPKNSTAGGYADHMYGARVAKISVNLKEFLLASMNLTYVSKIGGPIAGELIADGSKSQAAENWPNCWLPLDNNVPSATPSAWWRWALMMMQPTDSCRFFNHPKQMTLQDMGRMFGGWHLFRHIETRFQLLATKNEGSFSPVASLLSQGEYLTRRDDVKYSSDHQNRWRKGEQPMTGGIAYATGKMRLDEQQYPAMPPDPPIITTTTAQGTQVRCMNSTQAWWSWDTYMSFATLTALGAQWSFPPGQRSVSRRSFNHHKARGAGDPKGQRWHTLVPLGTETITDSYMRAPASELDTNFFTLYVAQGTNKSQQYKFGTATYALKEPVMKSDSWAVVRVQSVWQLGNRQRPYPWDVNWANSTMYWGSQP</sequence>
<evidence type="ECO:0000250" key="1"/>
<evidence type="ECO:0000255" key="2"/>
<evidence type="ECO:0000305" key="3"/>
<proteinExistence type="evidence at transcript level"/>
<keyword id="KW-0167">Capsid protein</keyword>
<keyword id="KW-0238">DNA-binding</keyword>
<keyword id="KW-1048">Host nucleus</keyword>
<keyword id="KW-0945">Host-virus interaction</keyword>
<keyword id="KW-0426">Late protein</keyword>
<keyword id="KW-1140">T=1 icosahedral capsid protein</keyword>
<keyword id="KW-1161">Viral attachment to host cell</keyword>
<keyword id="KW-1162">Viral penetration into host cytoplasm</keyword>
<keyword id="KW-1163">Viral penetration into host nucleus</keyword>
<keyword id="KW-0946">Virion</keyword>
<keyword id="KW-1164">Virus endocytosis by host</keyword>
<keyword id="KW-1160">Virus entry into host cell</keyword>
<comment type="function">
    <text evidence="1">Self-assembles to form the virion icosahedral capsid with a T=1 symmetry. This very small capsid (25 nm in diameter) allows the virus to be very stable in the environment and resistant to some disinfectants, including detergents. Essential for the initial attachment to host receptors. After attachment, the virus is endocytosed and traffics to the nucleus. The capsid protein binds and transports the viral genome and Rep across the nuclear envelope (By similarity).</text>
</comment>
<comment type="subunit">
    <text evidence="1 3">Homomultimer (Potential). Interacts with Rep; this interaction relocates Rep into the nucleus (By similarity).</text>
</comment>
<comment type="subcellular location">
    <subcellularLocation>
        <location evidence="1">Host nucleus</location>
    </subcellularLocation>
    <subcellularLocation>
        <location evidence="3">Virion</location>
    </subcellularLocation>
</comment>
<comment type="induction">
    <text>VP1 and VP2 are detected 12 hours post infection, while VP3 only after 24 hours.</text>
</comment>
<comment type="similarity">
    <text evidence="3">Belongs to the gyrovirus capsid protein family.</text>
</comment>